<name>VL1_HPV61</name>
<keyword id="KW-0167">Capsid protein</keyword>
<keyword id="KW-1015">Disulfide bond</keyword>
<keyword id="KW-1048">Host nucleus</keyword>
<keyword id="KW-0945">Host-virus interaction</keyword>
<keyword id="KW-0426">Late protein</keyword>
<keyword id="KW-1185">Reference proteome</keyword>
<keyword id="KW-1145">T=7 icosahedral capsid protein</keyword>
<keyword id="KW-1161">Viral attachment to host cell</keyword>
<keyword id="KW-1162">Viral penetration into host cytoplasm</keyword>
<keyword id="KW-0946">Virion</keyword>
<keyword id="KW-1164">Virus endocytosis by host</keyword>
<keyword id="KW-1160">Virus entry into host cell</keyword>
<protein>
    <recommendedName>
        <fullName evidence="1">Major capsid protein L1</fullName>
    </recommendedName>
</protein>
<accession>P50822</accession>
<accession>Q80954</accession>
<evidence type="ECO:0000255" key="1">
    <source>
        <dbReference type="HAMAP-Rule" id="MF_04002"/>
    </source>
</evidence>
<evidence type="ECO:0000256" key="2">
    <source>
        <dbReference type="SAM" id="MobiDB-lite"/>
    </source>
</evidence>
<evidence type="ECO:0000305" key="3"/>
<dbReference type="EMBL" id="U31793">
    <property type="protein sequence ID" value="AAA79498.1"/>
    <property type="molecule type" value="Genomic_DNA"/>
</dbReference>
<dbReference type="EMBL" id="U12500">
    <property type="protein sequence ID" value="AAA67244.1"/>
    <property type="molecule type" value="Genomic_DNA"/>
</dbReference>
<dbReference type="RefSeq" id="NP_043450.1">
    <property type="nucleotide sequence ID" value="NC_001694.1"/>
</dbReference>
<dbReference type="SMR" id="P50822"/>
<dbReference type="GeneID" id="1403318"/>
<dbReference type="KEGG" id="vg:1403318"/>
<dbReference type="Proteomes" id="UP000007670">
    <property type="component" value="Genome"/>
</dbReference>
<dbReference type="GO" id="GO:0042025">
    <property type="term" value="C:host cell nucleus"/>
    <property type="evidence" value="ECO:0007669"/>
    <property type="project" value="UniProtKB-SubCell"/>
</dbReference>
<dbReference type="GO" id="GO:0039620">
    <property type="term" value="C:T=7 icosahedral viral capsid"/>
    <property type="evidence" value="ECO:0007669"/>
    <property type="project" value="UniProtKB-UniRule"/>
</dbReference>
<dbReference type="GO" id="GO:0005198">
    <property type="term" value="F:structural molecule activity"/>
    <property type="evidence" value="ECO:0007669"/>
    <property type="project" value="UniProtKB-UniRule"/>
</dbReference>
<dbReference type="GO" id="GO:0075509">
    <property type="term" value="P:endocytosis involved in viral entry into host cell"/>
    <property type="evidence" value="ECO:0007669"/>
    <property type="project" value="UniProtKB-KW"/>
</dbReference>
<dbReference type="GO" id="GO:0019062">
    <property type="term" value="P:virion attachment to host cell"/>
    <property type="evidence" value="ECO:0007669"/>
    <property type="project" value="UniProtKB-UniRule"/>
</dbReference>
<dbReference type="Gene3D" id="2.60.175.20">
    <property type="entry name" value="Major capsid L1 (late) superfamily, Papillomavirus"/>
    <property type="match status" value="2"/>
</dbReference>
<dbReference type="HAMAP" id="MF_04002">
    <property type="entry name" value="PPV_L1"/>
    <property type="match status" value="1"/>
</dbReference>
<dbReference type="InterPro" id="IPR002210">
    <property type="entry name" value="Capsid_L1_Papillomavir"/>
</dbReference>
<dbReference type="InterPro" id="IPR036973">
    <property type="entry name" value="Capsid_L1_sf_Papillomavir"/>
</dbReference>
<dbReference type="InterPro" id="IPR011222">
    <property type="entry name" value="dsDNA_vir_gr_I_capsid"/>
</dbReference>
<dbReference type="Pfam" id="PF00500">
    <property type="entry name" value="Late_protein_L1"/>
    <property type="match status" value="1"/>
</dbReference>
<dbReference type="PRINTS" id="PR00865">
    <property type="entry name" value="HPVCAPSIDL1"/>
</dbReference>
<dbReference type="SUPFAM" id="SSF88648">
    <property type="entry name" value="Group I dsDNA viruses"/>
    <property type="match status" value="1"/>
</dbReference>
<feature type="chain" id="PRO_0000133543" description="Major capsid protein L1">
    <location>
        <begin position="1"/>
        <end position="505"/>
    </location>
</feature>
<feature type="region of interest" description="Disordered" evidence="2">
    <location>
        <begin position="476"/>
        <end position="505"/>
    </location>
</feature>
<feature type="compositionally biased region" description="Low complexity" evidence="2">
    <location>
        <begin position="487"/>
        <end position="497"/>
    </location>
</feature>
<feature type="disulfide bond" description="Interchain (with C-429)" evidence="1">
    <location>
        <position position="176"/>
    </location>
</feature>
<feature type="disulfide bond" description="Interchain (with C-176)" evidence="1">
    <location>
        <position position="429"/>
    </location>
</feature>
<feature type="sequence conflict" description="In Ref. 2; AAA67244." evidence="3" ref="2">
    <original>Q</original>
    <variation>P</variation>
    <location>
        <position position="374"/>
    </location>
</feature>
<feature type="sequence conflict" description="In Ref. 2; AAA67244." evidence="3" ref="2">
    <original>Q</original>
    <variation>L</variation>
    <location>
        <position position="430"/>
    </location>
</feature>
<gene>
    <name evidence="1" type="primary">L1</name>
</gene>
<reference key="1">
    <citation type="submission" date="1995-10" db="EMBL/GenBank/DDBJ databases">
        <authorList>
            <person name="Delius H."/>
        </authorList>
    </citation>
    <scope>NUCLEOTIDE SEQUENCE [GENOMIC DNA]</scope>
</reference>
<reference key="2">
    <citation type="journal article" date="1994" name="J. Infect. Dis.">
        <title>Identification and assessment of known and novel human papillomaviruses by polymerase chain reaction amplification, restriction fragment length polymorphisms, nucleotide sequence, and phylogenetic algorithms.</title>
        <authorList>
            <person name="Bernard H.U."/>
            <person name="Chan S.-Y."/>
            <person name="Manos M.M."/>
            <person name="Ong C.K."/>
            <person name="Villa L.L."/>
            <person name="Delius H."/>
            <person name="Peyton C.L."/>
            <person name="Bauer H.M."/>
            <person name="Wheeler C.M."/>
        </authorList>
    </citation>
    <scope>NUCLEOTIDE SEQUENCE [GENOMIC DNA] OF 317-468</scope>
</reference>
<sequence length="505" mass="56710">MALWRPGDGKVYLPPTPVSKVISTDRYVQRTNLFYYGGSSRLLTVGHPYCSLQLDGLQGKKNTIPKVSGYQYRVFRVQLPDPNKFALPDGTLYNPDTERMVWACRGIEVGRGQPLGVGTSGHPLYNRLDDTENTTLLVAESSDSRDNVSVDYKQTQLLIVGCKPPIGEHWTKGTACANPAPRPTDCPPLEFTNTTIQDGDMVETGYGAIDFAALQENKSEVPLDICTTICKYPDYLQMAAEPYGDCMFFCLRREQMFARHFFNRQGVMGEALPDSYYLKGANDKAAPGSYIYSPTPSGSMVSSDSQLFNKPYWLQRAQGHNNGICWFNELFVTVVDTTRSTNLTICTATSPPVSEYKATSFREYLRHTEEFDLQFIFQLCKIHLTPEIMAYLHNMNKALLDDWNFGVVPPPSTSLEDTYRFLQSRAITCQKGAAAPPPKEDRYAKLSFWTVDLRDKFSTDLDQFPLGRKFLLQAGPRSVSVSRKRAAPSSTPTSSPATKRKKRKQ</sequence>
<organism>
    <name type="scientific">Human papillomavirus type 61</name>
    <dbReference type="NCBI Taxonomy" id="37116"/>
    <lineage>
        <taxon>Viruses</taxon>
        <taxon>Monodnaviria</taxon>
        <taxon>Shotokuvirae</taxon>
        <taxon>Cossaviricota</taxon>
        <taxon>Papovaviricetes</taxon>
        <taxon>Zurhausenvirales</taxon>
        <taxon>Papillomaviridae</taxon>
        <taxon>Firstpapillomavirinae</taxon>
        <taxon>Alphapapillomavirus</taxon>
        <taxon>Alphapapillomavirus 3</taxon>
    </lineage>
</organism>
<organismHost>
    <name type="scientific">Homo sapiens</name>
    <name type="common">Human</name>
    <dbReference type="NCBI Taxonomy" id="9606"/>
</organismHost>
<comment type="function">
    <text evidence="1">Forms an icosahedral capsid with a T=7 symmetry and a 50 nm diameter. The capsid is composed of 72 pentamers linked to each other by disulfide bonds and associated with L2 proteins. Binds to heparan sulfate proteoglycans on cell surface of basal layer keratinocytes to provide initial virion attachment. This binding mediates a conformational change in the virus capsid that facilitates efficient infection. The virion enters the host cell via endocytosis. During virus trafficking, L1 protein dissociates from the viral DNA and the genomic DNA is released to the host nucleus. The virion assembly takes place within the cell nucleus. Encapsulates the genomic DNA together with protein L2.</text>
</comment>
<comment type="subunit">
    <text evidence="1">Self-assembles into homopentamers. The capsid has an icosahedral symmetry and consists of 72 capsomers, with each capsomer being a pentamer of L1. Interacts with the minor capsid protein L2; this interaction is necessary for viral genome encapsidation. Interacts with protein E2; this interaction enhances E2-dependent replication and transcription activation.</text>
</comment>
<comment type="subcellular location">
    <subcellularLocation>
        <location evidence="1">Virion</location>
    </subcellularLocation>
    <subcellularLocation>
        <location evidence="1">Host nucleus</location>
    </subcellularLocation>
</comment>
<comment type="similarity">
    <text evidence="1">Belongs to the papillomaviridae L1 protein family.</text>
</comment>
<proteinExistence type="inferred from homology"/>